<organism>
    <name type="scientific">Shewanella sp. (strain MR-7)</name>
    <dbReference type="NCBI Taxonomy" id="60481"/>
    <lineage>
        <taxon>Bacteria</taxon>
        <taxon>Pseudomonadati</taxon>
        <taxon>Pseudomonadota</taxon>
        <taxon>Gammaproteobacteria</taxon>
        <taxon>Alteromonadales</taxon>
        <taxon>Shewanellaceae</taxon>
        <taxon>Shewanella</taxon>
    </lineage>
</organism>
<gene>
    <name evidence="1" type="primary">iscS</name>
    <name type="ordered locus">Shewmr7_1819</name>
</gene>
<dbReference type="EC" id="2.8.1.7" evidence="1"/>
<dbReference type="EMBL" id="CP000444">
    <property type="protein sequence ID" value="ABI42811.1"/>
    <property type="molecule type" value="Genomic_DNA"/>
</dbReference>
<dbReference type="SMR" id="Q0HVP4"/>
<dbReference type="KEGG" id="shm:Shewmr7_1819"/>
<dbReference type="HOGENOM" id="CLU_003433_0_2_6"/>
<dbReference type="UniPathway" id="UPA00266"/>
<dbReference type="GO" id="GO:1990221">
    <property type="term" value="C:L-cysteine desulfurase complex"/>
    <property type="evidence" value="ECO:0007669"/>
    <property type="project" value="UniProtKB-ARBA"/>
</dbReference>
<dbReference type="GO" id="GO:0051537">
    <property type="term" value="F:2 iron, 2 sulfur cluster binding"/>
    <property type="evidence" value="ECO:0007669"/>
    <property type="project" value="UniProtKB-UniRule"/>
</dbReference>
<dbReference type="GO" id="GO:0031071">
    <property type="term" value="F:cysteine desulfurase activity"/>
    <property type="evidence" value="ECO:0007669"/>
    <property type="project" value="UniProtKB-UniRule"/>
</dbReference>
<dbReference type="GO" id="GO:0046872">
    <property type="term" value="F:metal ion binding"/>
    <property type="evidence" value="ECO:0007669"/>
    <property type="project" value="UniProtKB-KW"/>
</dbReference>
<dbReference type="GO" id="GO:0030170">
    <property type="term" value="F:pyridoxal phosphate binding"/>
    <property type="evidence" value="ECO:0007669"/>
    <property type="project" value="UniProtKB-UniRule"/>
</dbReference>
<dbReference type="GO" id="GO:0044571">
    <property type="term" value="P:[2Fe-2S] cluster assembly"/>
    <property type="evidence" value="ECO:0007669"/>
    <property type="project" value="UniProtKB-UniRule"/>
</dbReference>
<dbReference type="FunFam" id="3.40.640.10:FF:000003">
    <property type="entry name" value="Cysteine desulfurase IscS"/>
    <property type="match status" value="1"/>
</dbReference>
<dbReference type="FunFam" id="3.90.1150.10:FF:000002">
    <property type="entry name" value="Cysteine desulfurase IscS"/>
    <property type="match status" value="1"/>
</dbReference>
<dbReference type="Gene3D" id="3.90.1150.10">
    <property type="entry name" value="Aspartate Aminotransferase, domain 1"/>
    <property type="match status" value="1"/>
</dbReference>
<dbReference type="Gene3D" id="3.40.640.10">
    <property type="entry name" value="Type I PLP-dependent aspartate aminotransferase-like (Major domain)"/>
    <property type="match status" value="1"/>
</dbReference>
<dbReference type="HAMAP" id="MF_00331">
    <property type="entry name" value="Cys_desulf_IscS"/>
    <property type="match status" value="1"/>
</dbReference>
<dbReference type="InterPro" id="IPR000192">
    <property type="entry name" value="Aminotrans_V_dom"/>
</dbReference>
<dbReference type="InterPro" id="IPR020578">
    <property type="entry name" value="Aminotrans_V_PyrdxlP_BS"/>
</dbReference>
<dbReference type="InterPro" id="IPR010240">
    <property type="entry name" value="Cys_deSase_IscS"/>
</dbReference>
<dbReference type="InterPro" id="IPR016454">
    <property type="entry name" value="Cysteine_dSase"/>
</dbReference>
<dbReference type="InterPro" id="IPR015424">
    <property type="entry name" value="PyrdxlP-dep_Trfase"/>
</dbReference>
<dbReference type="InterPro" id="IPR015421">
    <property type="entry name" value="PyrdxlP-dep_Trfase_major"/>
</dbReference>
<dbReference type="InterPro" id="IPR015422">
    <property type="entry name" value="PyrdxlP-dep_Trfase_small"/>
</dbReference>
<dbReference type="NCBIfam" id="TIGR02006">
    <property type="entry name" value="IscS"/>
    <property type="match status" value="1"/>
</dbReference>
<dbReference type="NCBIfam" id="NF002806">
    <property type="entry name" value="PRK02948.1"/>
    <property type="match status" value="1"/>
</dbReference>
<dbReference type="NCBIfam" id="NF010611">
    <property type="entry name" value="PRK14012.1"/>
    <property type="match status" value="1"/>
</dbReference>
<dbReference type="PANTHER" id="PTHR11601:SF34">
    <property type="entry name" value="CYSTEINE DESULFURASE"/>
    <property type="match status" value="1"/>
</dbReference>
<dbReference type="PANTHER" id="PTHR11601">
    <property type="entry name" value="CYSTEINE DESULFURYLASE FAMILY MEMBER"/>
    <property type="match status" value="1"/>
</dbReference>
<dbReference type="Pfam" id="PF00266">
    <property type="entry name" value="Aminotran_5"/>
    <property type="match status" value="1"/>
</dbReference>
<dbReference type="PIRSF" id="PIRSF005572">
    <property type="entry name" value="NifS"/>
    <property type="match status" value="1"/>
</dbReference>
<dbReference type="SUPFAM" id="SSF53383">
    <property type="entry name" value="PLP-dependent transferases"/>
    <property type="match status" value="1"/>
</dbReference>
<dbReference type="PROSITE" id="PS00595">
    <property type="entry name" value="AA_TRANSFER_CLASS_5"/>
    <property type="match status" value="1"/>
</dbReference>
<accession>Q0HVP4</accession>
<protein>
    <recommendedName>
        <fullName evidence="1">Cysteine desulfurase IscS</fullName>
        <ecNumber evidence="1">2.8.1.7</ecNumber>
    </recommendedName>
</protein>
<reference key="1">
    <citation type="submission" date="2006-08" db="EMBL/GenBank/DDBJ databases">
        <title>Complete sequence of chromosome 1 of Shewanella sp. MR-7.</title>
        <authorList>
            <person name="Copeland A."/>
            <person name="Lucas S."/>
            <person name="Lapidus A."/>
            <person name="Barry K."/>
            <person name="Detter J.C."/>
            <person name="Glavina del Rio T."/>
            <person name="Hammon N."/>
            <person name="Israni S."/>
            <person name="Dalin E."/>
            <person name="Tice H."/>
            <person name="Pitluck S."/>
            <person name="Kiss H."/>
            <person name="Brettin T."/>
            <person name="Bruce D."/>
            <person name="Han C."/>
            <person name="Tapia R."/>
            <person name="Gilna P."/>
            <person name="Schmutz J."/>
            <person name="Larimer F."/>
            <person name="Land M."/>
            <person name="Hauser L."/>
            <person name="Kyrpides N."/>
            <person name="Mikhailova N."/>
            <person name="Nealson K."/>
            <person name="Konstantinidis K."/>
            <person name="Klappenbach J."/>
            <person name="Tiedje J."/>
            <person name="Richardson P."/>
        </authorList>
    </citation>
    <scope>NUCLEOTIDE SEQUENCE [LARGE SCALE GENOMIC DNA]</scope>
    <source>
        <strain>MR-7</strain>
    </source>
</reference>
<keyword id="KW-0001">2Fe-2S</keyword>
<keyword id="KW-0963">Cytoplasm</keyword>
<keyword id="KW-0408">Iron</keyword>
<keyword id="KW-0411">Iron-sulfur</keyword>
<keyword id="KW-0479">Metal-binding</keyword>
<keyword id="KW-0663">Pyridoxal phosphate</keyword>
<keyword id="KW-0808">Transferase</keyword>
<proteinExistence type="inferred from homology"/>
<comment type="function">
    <text evidence="1">Master enzyme that delivers sulfur to a number of partners involved in Fe-S cluster assembly, tRNA modification or cofactor biosynthesis. Catalyzes the removal of elemental sulfur atoms from cysteine to produce alanine. Functions as a sulfur delivery protein for Fe-S cluster synthesis onto IscU, an Fe-S scaffold assembly protein, as well as other S acceptor proteins.</text>
</comment>
<comment type="catalytic activity">
    <reaction evidence="1">
        <text>(sulfur carrier)-H + L-cysteine = (sulfur carrier)-SH + L-alanine</text>
        <dbReference type="Rhea" id="RHEA:43892"/>
        <dbReference type="Rhea" id="RHEA-COMP:14737"/>
        <dbReference type="Rhea" id="RHEA-COMP:14739"/>
        <dbReference type="ChEBI" id="CHEBI:29917"/>
        <dbReference type="ChEBI" id="CHEBI:35235"/>
        <dbReference type="ChEBI" id="CHEBI:57972"/>
        <dbReference type="ChEBI" id="CHEBI:64428"/>
        <dbReference type="EC" id="2.8.1.7"/>
    </reaction>
</comment>
<comment type="cofactor">
    <cofactor evidence="1">
        <name>pyridoxal 5'-phosphate</name>
        <dbReference type="ChEBI" id="CHEBI:597326"/>
    </cofactor>
</comment>
<comment type="pathway">
    <text evidence="1">Cofactor biosynthesis; iron-sulfur cluster biosynthesis.</text>
</comment>
<comment type="subunit">
    <text evidence="1">Homodimer. Forms a heterotetramer with IscU, interacts with other sulfur acceptors.</text>
</comment>
<comment type="subcellular location">
    <subcellularLocation>
        <location evidence="1">Cytoplasm</location>
    </subcellularLocation>
</comment>
<comment type="similarity">
    <text evidence="1">Belongs to the class-V pyridoxal-phosphate-dependent aminotransferase family. NifS/IscS subfamily.</text>
</comment>
<name>ISCS_SHESR</name>
<evidence type="ECO:0000255" key="1">
    <source>
        <dbReference type="HAMAP-Rule" id="MF_00331"/>
    </source>
</evidence>
<feature type="chain" id="PRO_1000019450" description="Cysteine desulfurase IscS">
    <location>
        <begin position="1"/>
        <end position="404"/>
    </location>
</feature>
<feature type="active site" description="Cysteine persulfide intermediate" evidence="1">
    <location>
        <position position="328"/>
    </location>
</feature>
<feature type="binding site" evidence="1">
    <location>
        <begin position="75"/>
        <end position="76"/>
    </location>
    <ligand>
        <name>pyridoxal 5'-phosphate</name>
        <dbReference type="ChEBI" id="CHEBI:597326"/>
    </ligand>
</feature>
<feature type="binding site" evidence="1">
    <location>
        <position position="155"/>
    </location>
    <ligand>
        <name>pyridoxal 5'-phosphate</name>
        <dbReference type="ChEBI" id="CHEBI:597326"/>
    </ligand>
</feature>
<feature type="binding site" evidence="1">
    <location>
        <position position="183"/>
    </location>
    <ligand>
        <name>pyridoxal 5'-phosphate</name>
        <dbReference type="ChEBI" id="CHEBI:597326"/>
    </ligand>
</feature>
<feature type="binding site" evidence="1">
    <location>
        <begin position="203"/>
        <end position="205"/>
    </location>
    <ligand>
        <name>pyridoxal 5'-phosphate</name>
        <dbReference type="ChEBI" id="CHEBI:597326"/>
    </ligand>
</feature>
<feature type="binding site" evidence="1">
    <location>
        <position position="243"/>
    </location>
    <ligand>
        <name>pyridoxal 5'-phosphate</name>
        <dbReference type="ChEBI" id="CHEBI:597326"/>
    </ligand>
</feature>
<feature type="binding site" description="via persulfide group" evidence="1">
    <location>
        <position position="328"/>
    </location>
    <ligand>
        <name>[2Fe-2S] cluster</name>
        <dbReference type="ChEBI" id="CHEBI:190135"/>
        <note>ligand shared with IscU</note>
    </ligand>
</feature>
<feature type="modified residue" description="N6-(pyridoxal phosphate)lysine" evidence="1">
    <location>
        <position position="206"/>
    </location>
</feature>
<sequence>MKLPIYLDYAATTPVDPRVAEKMFQYMTMDGIFGNPASRSHRYGWQAEEAVDVARSQVADLINADHREIVFTSGATESNNLAIKGVAHFYNKKGKHIITSKTEHKAVLDTCRQLEREGFEVTYLEPEANGIIPMERLEAAMRDDTILVSIMHVNNEIGVIHDVDAIGELCRSKGIIFHMDAAQSAGKLPIDVQTTKVDLISISGHKMYGPKGIGALYVRRKPRIRLEAQMHGGGHERGMRSGTLATHQIVGLGEAAAIAKAEMATDNARIAKLRDKLWNGIKHIEETYVNGDMTHRVSGSLNVSFNYVEGESLMMALKDLAVSSGSACTSASLEPSYVLRALGLNDEMAHSSIRFSIGRFTTEEEIDHAIETITQSIDKLREMSPLWEMFKDGIDLNQVQWAHH</sequence>